<keyword id="KW-0963">Cytoplasm</keyword>
<keyword id="KW-0539">Nucleus</keyword>
<keyword id="KW-1185">Reference proteome</keyword>
<keyword id="KW-0690">Ribosome biogenesis</keyword>
<keyword id="KW-0813">Transport</keyword>
<name>ALB1_LODEL</name>
<accession>A5E748</accession>
<proteinExistence type="inferred from homology"/>
<evidence type="ECO:0000250" key="1"/>
<evidence type="ECO:0000256" key="2">
    <source>
        <dbReference type="SAM" id="MobiDB-lite"/>
    </source>
</evidence>
<evidence type="ECO:0000305" key="3"/>
<feature type="chain" id="PRO_0000333330" description="Ribosome biogenesis protein ALB1">
    <location>
        <begin position="1"/>
        <end position="149"/>
    </location>
</feature>
<feature type="region of interest" description="Disordered" evidence="2">
    <location>
        <begin position="1"/>
        <end position="58"/>
    </location>
</feature>
<feature type="compositionally biased region" description="Low complexity" evidence="2">
    <location>
        <begin position="30"/>
        <end position="41"/>
    </location>
</feature>
<sequence>MAGRNAINKPKIKMLAQSHARSLSRKRAARSSVQTRSSTSRYASKSLTAPRPTDSKSLALYTGETPLSQSVMTTNTLSKKRAKKIARNQKYLSQKQEDELMMDMDKQMKEKSRLDKVKKALWDLIENFEKNGPTVLPTGEGTTLGVQSF</sequence>
<gene>
    <name type="primary">ALB1</name>
    <name type="ORF">LELG_05437</name>
</gene>
<reference key="1">
    <citation type="journal article" date="2009" name="Nature">
        <title>Evolution of pathogenicity and sexual reproduction in eight Candida genomes.</title>
        <authorList>
            <person name="Butler G."/>
            <person name="Rasmussen M.D."/>
            <person name="Lin M.F."/>
            <person name="Santos M.A.S."/>
            <person name="Sakthikumar S."/>
            <person name="Munro C.A."/>
            <person name="Rheinbay E."/>
            <person name="Grabherr M."/>
            <person name="Forche A."/>
            <person name="Reedy J.L."/>
            <person name="Agrafioti I."/>
            <person name="Arnaud M.B."/>
            <person name="Bates S."/>
            <person name="Brown A.J.P."/>
            <person name="Brunke S."/>
            <person name="Costanzo M.C."/>
            <person name="Fitzpatrick D.A."/>
            <person name="de Groot P.W.J."/>
            <person name="Harris D."/>
            <person name="Hoyer L.L."/>
            <person name="Hube B."/>
            <person name="Klis F.M."/>
            <person name="Kodira C."/>
            <person name="Lennard N."/>
            <person name="Logue M.E."/>
            <person name="Martin R."/>
            <person name="Neiman A.M."/>
            <person name="Nikolaou E."/>
            <person name="Quail M.A."/>
            <person name="Quinn J."/>
            <person name="Santos M.C."/>
            <person name="Schmitzberger F.F."/>
            <person name="Sherlock G."/>
            <person name="Shah P."/>
            <person name="Silverstein K.A.T."/>
            <person name="Skrzypek M.S."/>
            <person name="Soll D."/>
            <person name="Staggs R."/>
            <person name="Stansfield I."/>
            <person name="Stumpf M.P.H."/>
            <person name="Sudbery P.E."/>
            <person name="Srikantha T."/>
            <person name="Zeng Q."/>
            <person name="Berman J."/>
            <person name="Berriman M."/>
            <person name="Heitman J."/>
            <person name="Gow N.A.R."/>
            <person name="Lorenz M.C."/>
            <person name="Birren B.W."/>
            <person name="Kellis M."/>
            <person name="Cuomo C.A."/>
        </authorList>
    </citation>
    <scope>NUCLEOTIDE SEQUENCE [LARGE SCALE GENOMIC DNA]</scope>
    <source>
        <strain>ATCC 11503 / BCRC 21390 / CBS 2605 / JCM 1781 / NBRC 1676 / NRRL YB-4239</strain>
    </source>
</reference>
<protein>
    <recommendedName>
        <fullName>Ribosome biogenesis protein ALB1</fullName>
    </recommendedName>
</protein>
<comment type="function">
    <text evidence="1">Involved in proper assembly of pre-ribosomal particles during the biogenesis of the 60S ribosomal subunit. Accompanies the pre-60S particles to the cytoplasm (By similarity).</text>
</comment>
<comment type="subunit">
    <text evidence="1">Component of the nucleoplasmic and cytoplasmic pre-60S ribosomal particles.</text>
</comment>
<comment type="subcellular location">
    <subcellularLocation>
        <location evidence="1">Cytoplasm</location>
    </subcellularLocation>
    <subcellularLocation>
        <location evidence="1">Nucleus</location>
    </subcellularLocation>
</comment>
<comment type="similarity">
    <text evidence="3">Belongs to the ALB1 family.</text>
</comment>
<dbReference type="EMBL" id="CH981533">
    <property type="protein sequence ID" value="EDK47256.1"/>
    <property type="molecule type" value="Genomic_DNA"/>
</dbReference>
<dbReference type="RefSeq" id="XP_001523211.1">
    <property type="nucleotide sequence ID" value="XM_001523161.1"/>
</dbReference>
<dbReference type="SMR" id="A5E748"/>
<dbReference type="FunCoup" id="A5E748">
    <property type="interactions" value="212"/>
</dbReference>
<dbReference type="STRING" id="379508.A5E748"/>
<dbReference type="GeneID" id="5230463"/>
<dbReference type="KEGG" id="lel:PVL30_004977"/>
<dbReference type="VEuPathDB" id="FungiDB:LELG_05437"/>
<dbReference type="eggNOG" id="ENOG502S14D">
    <property type="taxonomic scope" value="Eukaryota"/>
</dbReference>
<dbReference type="HOGENOM" id="CLU_103824_0_0_1"/>
<dbReference type="InParanoid" id="A5E748"/>
<dbReference type="OMA" id="DELMMDM"/>
<dbReference type="OrthoDB" id="4086742at2759"/>
<dbReference type="Proteomes" id="UP000001996">
    <property type="component" value="Unassembled WGS sequence"/>
</dbReference>
<dbReference type="GO" id="GO:0005737">
    <property type="term" value="C:cytoplasm"/>
    <property type="evidence" value="ECO:0007669"/>
    <property type="project" value="UniProtKB-SubCell"/>
</dbReference>
<dbReference type="GO" id="GO:0005634">
    <property type="term" value="C:nucleus"/>
    <property type="evidence" value="ECO:0007669"/>
    <property type="project" value="UniProtKB-SubCell"/>
</dbReference>
<dbReference type="GO" id="GO:0042254">
    <property type="term" value="P:ribosome biogenesis"/>
    <property type="evidence" value="ECO:0007669"/>
    <property type="project" value="UniProtKB-KW"/>
</dbReference>
<dbReference type="InterPro" id="IPR022784">
    <property type="entry name" value="Ribosome_bgen_Alb1"/>
</dbReference>
<dbReference type="Pfam" id="PF09135">
    <property type="entry name" value="Alb1"/>
    <property type="match status" value="1"/>
</dbReference>
<organism>
    <name type="scientific">Lodderomyces elongisporus (strain ATCC 11503 / CBS 2605 / JCM 1781 / NBRC 1676 / NRRL YB-4239)</name>
    <name type="common">Yeast</name>
    <name type="synonym">Saccharomyces elongisporus</name>
    <dbReference type="NCBI Taxonomy" id="379508"/>
    <lineage>
        <taxon>Eukaryota</taxon>
        <taxon>Fungi</taxon>
        <taxon>Dikarya</taxon>
        <taxon>Ascomycota</taxon>
        <taxon>Saccharomycotina</taxon>
        <taxon>Pichiomycetes</taxon>
        <taxon>Debaryomycetaceae</taxon>
        <taxon>Candida/Lodderomyces clade</taxon>
        <taxon>Lodderomyces</taxon>
    </lineage>
</organism>